<protein>
    <recommendedName>
        <fullName evidence="11">MFS-type transporter patC</fullName>
    </recommendedName>
    <alternativeName>
        <fullName evidence="11">Patulin biosynthesis cluster protein C</fullName>
    </alternativeName>
</protein>
<accession>A0A075TRA9</accession>
<proteinExistence type="evidence at protein level"/>
<feature type="chain" id="PRO_0000445919" description="MFS-type transporter patC">
    <location>
        <begin position="1"/>
        <end position="546"/>
    </location>
</feature>
<feature type="transmembrane region" description="Helical" evidence="1">
    <location>
        <begin position="41"/>
        <end position="61"/>
    </location>
</feature>
<feature type="transmembrane region" description="Helical" evidence="1">
    <location>
        <begin position="89"/>
        <end position="109"/>
    </location>
</feature>
<feature type="transmembrane region" description="Helical" evidence="1">
    <location>
        <begin position="113"/>
        <end position="133"/>
    </location>
</feature>
<feature type="transmembrane region" description="Helical" evidence="1">
    <location>
        <begin position="143"/>
        <end position="163"/>
    </location>
</feature>
<feature type="transmembrane region" description="Helical" evidence="1">
    <location>
        <begin position="171"/>
        <end position="191"/>
    </location>
</feature>
<feature type="transmembrane region" description="Helical" evidence="1">
    <location>
        <begin position="203"/>
        <end position="223"/>
    </location>
</feature>
<feature type="transmembrane region" description="Helical" evidence="1">
    <location>
        <begin position="245"/>
        <end position="265"/>
    </location>
</feature>
<feature type="transmembrane region" description="Helical" evidence="1">
    <location>
        <begin position="277"/>
        <end position="297"/>
    </location>
</feature>
<feature type="transmembrane region" description="Helical" evidence="1">
    <location>
        <begin position="318"/>
        <end position="338"/>
    </location>
</feature>
<feature type="transmembrane region" description="Helical" evidence="1">
    <location>
        <begin position="350"/>
        <end position="370"/>
    </location>
</feature>
<feature type="transmembrane region" description="Helical" evidence="1">
    <location>
        <begin position="379"/>
        <end position="399"/>
    </location>
</feature>
<feature type="transmembrane region" description="Helical" evidence="1">
    <location>
        <begin position="416"/>
        <end position="436"/>
    </location>
</feature>
<feature type="transmembrane region" description="Helical" evidence="1">
    <location>
        <begin position="447"/>
        <end position="467"/>
    </location>
</feature>
<feature type="transmembrane region" description="Helical" evidence="1">
    <location>
        <begin position="515"/>
        <end position="535"/>
    </location>
</feature>
<feature type="region of interest" description="Disordered" evidence="2">
    <location>
        <begin position="1"/>
        <end position="29"/>
    </location>
</feature>
<feature type="compositionally biased region" description="Polar residues" evidence="2">
    <location>
        <begin position="1"/>
        <end position="15"/>
    </location>
</feature>
<feature type="compositionally biased region" description="Basic and acidic residues" evidence="2">
    <location>
        <begin position="16"/>
        <end position="29"/>
    </location>
</feature>
<evidence type="ECO:0000255" key="1"/>
<evidence type="ECO:0000256" key="2">
    <source>
        <dbReference type="SAM" id="MobiDB-lite"/>
    </source>
</evidence>
<evidence type="ECO:0000269" key="3">
    <source>
    </source>
</evidence>
<evidence type="ECO:0000269" key="4">
    <source>
    </source>
</evidence>
<evidence type="ECO:0000269" key="5">
    <source>
    </source>
</evidence>
<evidence type="ECO:0000269" key="6">
    <source>
    </source>
</evidence>
<evidence type="ECO:0000269" key="7">
    <source>
    </source>
</evidence>
<evidence type="ECO:0000269" key="8">
    <source>
    </source>
</evidence>
<evidence type="ECO:0000269" key="9">
    <source>
    </source>
</evidence>
<evidence type="ECO:0000269" key="10">
    <source>
    </source>
</evidence>
<evidence type="ECO:0000303" key="11">
    <source>
    </source>
</evidence>
<evidence type="ECO:0000305" key="12"/>
<evidence type="ECO:0000305" key="13">
    <source>
    </source>
</evidence>
<sequence length="546" mass="58733">MSIDASPSESVLESQTPDRVDESIPIKAEETEKDAAPGRDIVGFRWLLVCIAVFSANLLYGLDNTIVADIQAPIAGDFNEYTRLGWLGVGFTLGSVVFILPLGKAYAIFDTKWLFLGCLTMFAAGSALCGAAPSMNAIIVGRVWAGAGGAGMYLGNLNLITILTTPKEQPVYVGLVGLIYGTGCILGPIIGGAFSDSSATWRWSFYLNLVIFGVMSPIYVFLLPSLPRPAGEGRSFFKKLVELDWVGTVLSAGMHISIILFIVFGGVEWSWTDGRNIALYVVSAVLTIAFVLSQYFCIGTTKQDRLFPGEFLRDPTMLLLYIIMACGGAALFVAVYYIPLYFQFVHGDSGIMSAVRLLPFVCFYVATILLCGYVMPKTGYFIIWYLMSGVFMLIGAVLMYTVKLDTSPSNVYGYSILMGLGMTTTQAAYAVGPAIVTPDRVAECLQFMNIGQGQSQLLGLAIASAIFQTKTLSGLTALLGDKGYSQVDIQSAVAGAQSTLMERLPPALKTAALKVIVSSISDVYVMAISAGALYVVASCLLPRRRF</sequence>
<organism>
    <name type="scientific">Penicillium expansum</name>
    <name type="common">Blue mold rot fungus</name>
    <dbReference type="NCBI Taxonomy" id="27334"/>
    <lineage>
        <taxon>Eukaryota</taxon>
        <taxon>Fungi</taxon>
        <taxon>Dikarya</taxon>
        <taxon>Ascomycota</taxon>
        <taxon>Pezizomycotina</taxon>
        <taxon>Eurotiomycetes</taxon>
        <taxon>Eurotiomycetidae</taxon>
        <taxon>Eurotiales</taxon>
        <taxon>Aspergillaceae</taxon>
        <taxon>Penicillium</taxon>
    </lineage>
</organism>
<gene>
    <name evidence="11" type="primary">patC</name>
    <name type="ORF">PEX2_082790</name>
</gene>
<keyword id="KW-1003">Cell membrane</keyword>
<keyword id="KW-0472">Membrane</keyword>
<keyword id="KW-1185">Reference proteome</keyword>
<keyword id="KW-0812">Transmembrane</keyword>
<keyword id="KW-1133">Transmembrane helix</keyword>
<keyword id="KW-0813">Transport</keyword>
<keyword id="KW-0926">Vacuole</keyword>
<dbReference type="EMBL" id="KF899892">
    <property type="protein sequence ID" value="AIG62136.1"/>
    <property type="molecule type" value="Genomic_DNA"/>
</dbReference>
<dbReference type="EMBL" id="JQFZ01000262">
    <property type="protein sequence ID" value="KGO52632.1"/>
    <property type="molecule type" value="Genomic_DNA"/>
</dbReference>
<dbReference type="RefSeq" id="XP_016595362.1">
    <property type="nucleotide sequence ID" value="XM_016745549.1"/>
</dbReference>
<dbReference type="SMR" id="A0A075TRA9"/>
<dbReference type="GeneID" id="27680969"/>
<dbReference type="VEuPathDB" id="FungiDB:PEXP_094370"/>
<dbReference type="HOGENOM" id="CLU_000960_22_1_1"/>
<dbReference type="OrthoDB" id="10021397at2759"/>
<dbReference type="PhylomeDB" id="A0A075TRA9"/>
<dbReference type="Proteomes" id="UP000030143">
    <property type="component" value="Unassembled WGS sequence"/>
</dbReference>
<dbReference type="GO" id="GO:0005886">
    <property type="term" value="C:plasma membrane"/>
    <property type="evidence" value="ECO:0000314"/>
    <property type="project" value="GO_Central"/>
</dbReference>
<dbReference type="GO" id="GO:0005774">
    <property type="term" value="C:vacuolar membrane"/>
    <property type="evidence" value="ECO:0000314"/>
    <property type="project" value="GO_Central"/>
</dbReference>
<dbReference type="GO" id="GO:0022857">
    <property type="term" value="F:transmembrane transporter activity"/>
    <property type="evidence" value="ECO:0007669"/>
    <property type="project" value="InterPro"/>
</dbReference>
<dbReference type="GO" id="GO:0140723">
    <property type="term" value="P:patulin biosynthetic process"/>
    <property type="evidence" value="ECO:0000315"/>
    <property type="project" value="GO_Central"/>
</dbReference>
<dbReference type="CDD" id="cd17502">
    <property type="entry name" value="MFS_Azr1_MDR_like"/>
    <property type="match status" value="1"/>
</dbReference>
<dbReference type="Gene3D" id="1.20.1250.20">
    <property type="entry name" value="MFS general substrate transporter like domains"/>
    <property type="match status" value="2"/>
</dbReference>
<dbReference type="InterPro" id="IPR011701">
    <property type="entry name" value="MFS"/>
</dbReference>
<dbReference type="InterPro" id="IPR020846">
    <property type="entry name" value="MFS_dom"/>
</dbReference>
<dbReference type="InterPro" id="IPR036259">
    <property type="entry name" value="MFS_trans_sf"/>
</dbReference>
<dbReference type="PANTHER" id="PTHR23501">
    <property type="entry name" value="MAJOR FACILITATOR SUPERFAMILY"/>
    <property type="match status" value="1"/>
</dbReference>
<dbReference type="PANTHER" id="PTHR23501:SF12">
    <property type="entry name" value="MAJOR FACILITATOR SUPERFAMILY (MFS) PROFILE DOMAIN-CONTAINING PROTEIN-RELATED"/>
    <property type="match status" value="1"/>
</dbReference>
<dbReference type="Pfam" id="PF07690">
    <property type="entry name" value="MFS_1"/>
    <property type="match status" value="1"/>
</dbReference>
<dbReference type="SUPFAM" id="SSF103473">
    <property type="entry name" value="MFS general substrate transporter"/>
    <property type="match status" value="1"/>
</dbReference>
<dbReference type="PROSITE" id="PS50850">
    <property type="entry name" value="MFS"/>
    <property type="match status" value="1"/>
</dbReference>
<comment type="function">
    <text evidence="5 6 9 10 13">MFS-type transporter; part of the gene cluster that mediates the biosynthesis of patulin, an acetate-derived tetraketide mycotoxin produced by several fungal species that shows antimicrobial properties against several bacteria (PubMed:25120234, PubMed:25625822, PubMed:30100914, PubMed:30680886). May be involved in the secretion of E-ascladiol to be converted to patulin by the secreted patulin synthase patE (Probable).</text>
</comment>
<comment type="subcellular location">
    <subcellularLocation>
        <location evidence="10">Vacuole membrane</location>
        <topology evidence="10">Multi-pass membrane protein</topology>
    </subcellularLocation>
    <subcellularLocation>
        <location evidence="10">Cell membrane</location>
        <topology evidence="10">Multi-pass membrane protein</topology>
    </subcellularLocation>
</comment>
<comment type="induction">
    <text evidence="5 6 8 9 10">Expression is correlated with the production of patulin (PubMed:25120234). Expression is positively regulated by the secondary metabolism regulator laeA (PubMed:27528575, PubMed:30100914). Expression is strongly decreased with increased sucrose concentrations. This decrease is lost in the presence of malic acid (PubMed:30100914). Expression is increased with pH changes from 2.5 to 3.5 in the presence of a limiting concentration of sucrose, 50 mM (PubMed:30100914). Natural phenols present in apple fruits such as chlorogenic acid or the flavonoid epicatechin modulate patulin biosynthesis. They increase expression in the absence of sucrose, have little impact in the presence of 15 mM sucrose, and decrease expression in 175 mM sucrose (PubMed:30100914). Expression is positively regulated by the patulin cluster-specific transcription factor patL (PubMed:25625822). Finally, expression is also positively regulated by the velvet family proteins transcription regulators veA, velB, velC, but not vosA (PubMed:30680886).</text>
</comment>
<comment type="disruption phenotype">
    <text evidence="10">Strongly reduces the production of patulin.</text>
</comment>
<comment type="biotechnology">
    <text evidence="3 4 7">Patulin was originally used as an antibiotic and specifically trialed to be used against the common cold, but it is no longer used for that purpose since it has been shown to induce immunological, neurological and gastrointestinal effects (PubMed:15082620). Genotoxic effects of patulin with dose-dependent increase in DNA strand breaks in brain, liver and kidneys have been detected in mice (PubMed:22222931). However, more recently, it has been proposed that patulin might also have anti-tumor properties (PubMed:26619846).</text>
</comment>
<comment type="similarity">
    <text evidence="12">Belongs to the major facilitator superfamily. TCR/Tet family.</text>
</comment>
<name>PATC_PENEN</name>
<reference key="1">
    <citation type="journal article" date="2014" name="Int. J. Food Microbiol.">
        <title>Sequencing, physical organization and kinetic expression of the patulin biosynthetic gene cluster from Penicillium expansum.</title>
        <authorList>
            <person name="Tannous J."/>
            <person name="El Khoury R."/>
            <person name="Snini S.P."/>
            <person name="Lippi Y."/>
            <person name="El Khoury A."/>
            <person name="Atoui A."/>
            <person name="Lteif R."/>
            <person name="Oswald I.P."/>
            <person name="Puel O."/>
        </authorList>
    </citation>
    <scope>NUCLEOTIDE SEQUENCE [GENOMIC DNA]</scope>
    <scope>IDENTIFICATION</scope>
    <scope>FUNCTION</scope>
    <scope>INDUCTION</scope>
    <source>
        <strain>NRRL 35695</strain>
    </source>
</reference>
<reference key="2">
    <citation type="journal article" date="2015" name="Mol. Plant Microbe Interact.">
        <title>Genome, transcriptome, and functional analyses of Penicillium expansum provide new insights into secondary metabolism and pathogenicity.</title>
        <authorList>
            <person name="Ballester A.R."/>
            <person name="Marcet-Houben M."/>
            <person name="Levin E."/>
            <person name="Sela N."/>
            <person name="Selma-Lazaro C."/>
            <person name="Carmona L."/>
            <person name="Wisniewski M."/>
            <person name="Droby S."/>
            <person name="Gonzalez-Candelas L."/>
            <person name="Gabaldon T."/>
        </authorList>
    </citation>
    <scope>NUCLEOTIDE SEQUENCE [LARGE SCALE GENOMIC DNA]</scope>
    <source>
        <strain>MD-8</strain>
    </source>
</reference>
<reference key="3">
    <citation type="journal article" date="2004" name="Int. J. Epidemiol.">
        <title>Clinical trial of patulin in the common cold. 1944.</title>
        <authorList>
            <consortium name="Patulin Clinical Trials Committee, Medical Research Council"/>
        </authorList>
    </citation>
    <scope>BIOTECHNOLOGY</scope>
</reference>
<reference key="4">
    <citation type="journal article" date="2012" name="Food Chem. Toxicol.">
        <title>DNA damage in organs of mice treated acutely with patulin, a known mycotoxin.</title>
        <authorList>
            <person name="de Melo F.T."/>
            <person name="de Oliveira I.M."/>
            <person name="Greggio S."/>
            <person name="Dacosta J.C."/>
            <person name="Guecheva T.N."/>
            <person name="Saffi J."/>
            <person name="Henriques J.A."/>
            <person name="Rosa R.M."/>
        </authorList>
    </citation>
    <scope>BIOTECHNOLOGY</scope>
</reference>
<reference key="5">
    <citation type="journal article" date="2016" name="Tumor Biol.">
        <title>The potential effect of patulin on mice bearing melanoma cells: an anti-tumour or carcinogenic effect?</title>
        <authorList>
            <person name="Boussabbeh M."/>
            <person name="Ben Salem I."/>
            <person name="Rjiba-Touati K."/>
            <person name="Bouyahya C."/>
            <person name="Neffati F."/>
            <person name="Najjar M.F."/>
            <person name="Bacha H."/>
            <person name="Abid-Essefi S."/>
        </authorList>
    </citation>
    <scope>BIOTECHNOLOGY</scope>
</reference>
<reference key="6">
    <citation type="journal article" date="2017" name="Mol. Plant Pathol.">
        <title>LaeA regulation of secondary metabolism modulates virulence in Penicillium expansum and is mediated by sucrose.</title>
        <authorList>
            <person name="Kumar D."/>
            <person name="Barad S."/>
            <person name="Chen Y."/>
            <person name="Luo X."/>
            <person name="Tannous J."/>
            <person name="Dubey A."/>
            <person name="Glam Matana N."/>
            <person name="Tian S."/>
            <person name="Li B."/>
            <person name="Keller N."/>
            <person name="Prusky D."/>
        </authorList>
    </citation>
    <scope>INDUCTION</scope>
</reference>
<reference key="7">
    <citation type="journal article" date="2018" name="Front. Plant Sci.">
        <title>Apple intrinsic factors modulating the global regulator, LaeA, the patulin gene cluster and patulin accumulation during fruit colonization by Penicillium expansum.</title>
        <authorList>
            <person name="Kumar D."/>
            <person name="Tannous J."/>
            <person name="Sionov E."/>
            <person name="Keller N."/>
            <person name="Prusky D."/>
        </authorList>
    </citation>
    <scope>FUNCTION</scope>
    <scope>INDUCTION</scope>
</reference>
<reference key="8">
    <citation type="journal article" date="2015" name="Mol. Plant Microbe Interact.">
        <title>Genomic characterization reveals insights into patulin biosynthesis and pathogenicity in Penicillium species.</title>
        <authorList>
            <person name="Li B."/>
            <person name="Zong Y."/>
            <person name="Du Z."/>
            <person name="Chen Y."/>
            <person name="Zhang Z."/>
            <person name="Qin G."/>
            <person name="Zhao W."/>
            <person name="Tian S."/>
        </authorList>
    </citation>
    <scope>FUNCTION</scope>
    <scope>INDUCTION</scope>
</reference>
<reference key="9">
    <citation type="journal article" date="2019" name="Environ. Microbiol.">
        <title>Dissection of patulin biosynthesis, spatial control and regulation mechanism in Penicillium expansum.</title>
        <authorList>
            <person name="Li B."/>
            <person name="Chen Y."/>
            <person name="Zong Y."/>
            <person name="Shang Y."/>
            <person name="Zhang Z."/>
            <person name="Xu X."/>
            <person name="Wang X."/>
            <person name="Long M."/>
            <person name="Tian S."/>
        </authorList>
    </citation>
    <scope>FUNCTION</scope>
    <scope>DISRUPTION PHENOTYPE</scope>
    <scope>SUBCELLULAR LOCATION</scope>
    <scope>INDUCTION</scope>
</reference>